<keyword id="KW-1015">Disulfide bond</keyword>
<keyword id="KW-0305">Gaseous exchange</keyword>
<keyword id="KW-0449">Lipoprotein</keyword>
<keyword id="KW-0564">Palmitate</keyword>
<keyword id="KW-1185">Reference proteome</keyword>
<keyword id="KW-0964">Secreted</keyword>
<keyword id="KW-0767">Surface film</keyword>
<gene>
    <name type="primary">SFTPC</name>
    <name type="synonym">SFTP2</name>
</gene>
<protein>
    <recommendedName>
        <fullName evidence="2">Surfactant protein C</fullName>
        <shortName>SP-C</shortName>
    </recommendedName>
    <alternativeName>
        <fullName>Pulmonary surfactant-associated protein C</fullName>
    </alternativeName>
</protein>
<organism>
    <name type="scientific">Neovison vison</name>
    <name type="common">American mink</name>
    <name type="synonym">Mustela vison</name>
    <dbReference type="NCBI Taxonomy" id="452646"/>
    <lineage>
        <taxon>Eukaryota</taxon>
        <taxon>Metazoa</taxon>
        <taxon>Chordata</taxon>
        <taxon>Craniata</taxon>
        <taxon>Vertebrata</taxon>
        <taxon>Euteleostomi</taxon>
        <taxon>Mammalia</taxon>
        <taxon>Eutheria</taxon>
        <taxon>Laurasiatheria</taxon>
        <taxon>Carnivora</taxon>
        <taxon>Caniformia</taxon>
        <taxon>Musteloidea</taxon>
        <taxon>Mustelidae</taxon>
        <taxon>Mustelinae</taxon>
        <taxon>Neogale</taxon>
    </lineage>
</organism>
<dbReference type="EMBL" id="Z19516">
    <property type="protein sequence ID" value="CAA79577.1"/>
    <property type="molecule type" value="mRNA"/>
</dbReference>
<dbReference type="PIR" id="S31490">
    <property type="entry name" value="S31490"/>
</dbReference>
<dbReference type="RefSeq" id="XP_044124087.1">
    <property type="nucleotide sequence ID" value="XM_044268152.1"/>
</dbReference>
<dbReference type="SMR" id="P35245"/>
<dbReference type="Ensembl" id="ENSNVIT00000033360.1">
    <property type="protein sequence ID" value="ENSNVIP00000028785.1"/>
    <property type="gene ID" value="ENSNVIG00000022200.1"/>
</dbReference>
<dbReference type="GeneID" id="122919234"/>
<dbReference type="GeneTree" id="ENSGT00390000017162"/>
<dbReference type="Proteomes" id="UP000694425">
    <property type="component" value="Unplaced"/>
</dbReference>
<dbReference type="GO" id="GO:0097208">
    <property type="term" value="C:alveolar lamellar body"/>
    <property type="evidence" value="ECO:0007669"/>
    <property type="project" value="TreeGrafter"/>
</dbReference>
<dbReference type="GO" id="GO:0005615">
    <property type="term" value="C:extracellular space"/>
    <property type="evidence" value="ECO:0007669"/>
    <property type="project" value="TreeGrafter"/>
</dbReference>
<dbReference type="GO" id="GO:0042802">
    <property type="term" value="F:identical protein binding"/>
    <property type="evidence" value="ECO:0007669"/>
    <property type="project" value="Ensembl"/>
</dbReference>
<dbReference type="GO" id="GO:0007585">
    <property type="term" value="P:respiratory gaseous exchange by respiratory system"/>
    <property type="evidence" value="ECO:0007669"/>
    <property type="project" value="UniProtKB-KW"/>
</dbReference>
<dbReference type="Gene3D" id="3.30.390.150">
    <property type="match status" value="1"/>
</dbReference>
<dbReference type="InterPro" id="IPR007084">
    <property type="entry name" value="BRICHOS_dom"/>
</dbReference>
<dbReference type="InterPro" id="IPR001729">
    <property type="entry name" value="SP-C"/>
</dbReference>
<dbReference type="InterPro" id="IPR015091">
    <property type="entry name" value="Surfactant_protein_propep"/>
</dbReference>
<dbReference type="PANTHER" id="PTHR10800">
    <property type="entry name" value="PULMONARY SURFACTANT-ASSOCIATED PROTEIN C"/>
    <property type="match status" value="1"/>
</dbReference>
<dbReference type="PANTHER" id="PTHR10800:SF4">
    <property type="entry name" value="PULMONARY SURFACTANT-ASSOCIATED PROTEIN C"/>
    <property type="match status" value="1"/>
</dbReference>
<dbReference type="Pfam" id="PF04089">
    <property type="entry name" value="BRICHOS"/>
    <property type="match status" value="1"/>
</dbReference>
<dbReference type="Pfam" id="PF08999">
    <property type="entry name" value="SP_C-Propep"/>
    <property type="match status" value="1"/>
</dbReference>
<dbReference type="SMART" id="SM01039">
    <property type="entry name" value="BRICHOS"/>
    <property type="match status" value="1"/>
</dbReference>
<dbReference type="SMART" id="SM00019">
    <property type="entry name" value="SF_P"/>
    <property type="match status" value="1"/>
</dbReference>
<dbReference type="PROSITE" id="PS50869">
    <property type="entry name" value="BRICHOS"/>
    <property type="match status" value="1"/>
</dbReference>
<proteinExistence type="evidence at transcript level"/>
<feature type="propeptide" id="PRO_0000033486" evidence="1">
    <location>
        <begin position="1"/>
        <end position="23"/>
    </location>
</feature>
<feature type="chain" id="PRO_0000033487" description="Surfactant protein C">
    <location>
        <begin position="24"/>
        <end position="58"/>
    </location>
</feature>
<feature type="propeptide" id="PRO_0000033488">
    <location>
        <begin position="59"/>
        <end position="190"/>
    </location>
</feature>
<feature type="domain" description="BRICHOS" evidence="3">
    <location>
        <begin position="94"/>
        <end position="190"/>
    </location>
</feature>
<feature type="lipid moiety-binding region" description="S-palmitoyl cysteine" evidence="1">
    <location>
        <position position="28"/>
    </location>
</feature>
<feature type="disulfide bond" evidence="1">
    <location>
        <begin position="121"/>
        <end position="182"/>
    </location>
</feature>
<evidence type="ECO:0000250" key="1"/>
<evidence type="ECO:0000250" key="2">
    <source>
        <dbReference type="UniProtKB" id="P11686"/>
    </source>
</evidence>
<evidence type="ECO:0000255" key="3">
    <source>
        <dbReference type="PROSITE-ProRule" id="PRU00255"/>
    </source>
</evidence>
<sequence length="190" mass="20431">MDVGSKEVLIENPPDYSAAPQGRFGLPCFPSSLKRLLIIVVVIVLVVVVIVGALLMGLHMSQKHTEMVLEMSLGGPEAQQRLALQERAGTTATFSIGSTGIVVYDYQRLLIAYKPAPGTCCYIMKMAPENIPSLEALTRKFQNFQVKPAVSTSKLGQEEGHNAGSASPGDLDFLGTTVSTLCGEVPLYYI</sequence>
<reference key="1">
    <citation type="submission" date="1992-12" db="EMBL/GenBank/DDBJ databases">
        <title>Nucleotide and deduced amino acid sequence of the hydrophobic surfactant protein SP-C from mink.</title>
        <authorList>
            <person name="Christensen J."/>
            <person name="Belousov J."/>
            <person name="Storgaard T."/>
            <person name="Aasted B."/>
            <person name="Alexandersen S."/>
        </authorList>
    </citation>
    <scope>NUCLEOTIDE SEQUENCE [MRNA]</scope>
    <source>
        <tissue>Lung</tissue>
    </source>
</reference>
<accession>P35245</accession>
<name>PSPC_NEOVI</name>
<comment type="function">
    <text>Pulmonary surfactant associated proteins promote alveolar stability by lowering the surface tension at the air-liquid interface in the peripheral air spaces.</text>
</comment>
<comment type="subcellular location">
    <subcellularLocation>
        <location>Secreted</location>
        <location>Extracellular space</location>
        <location>Surface film</location>
    </subcellularLocation>
</comment>
<comment type="miscellaneous">
    <text>Pulmonary surfactant consists of 90% lipid and 10% protein. There are 4 surfactant-associated proteins: 2 collagenous, carbohydrate-binding glycoproteins (SP-A and SP-D) and 2 small hydrophobic proteins (SP-B and SP-C).</text>
</comment>